<name>RNZ_HALVD</name>
<sequence length="317" mass="34307">MSMRATFLGTGGAVPTTARAPSAFLVNRDGERLLFDCGEGTQRQMMRYGTGFGVSHLFVTHLHGDHILGIPGLIQTLDFNDRDDSLAIHGPPGSKGHLEQLVHAGGYQPGFHVSVHEVRPGNVAYRADDYEVRAFDTEHRTASVGYALVEDDRPGRFDREKAEELGVPVGPAFGRLHAGEDVELEDGTVVRSEQVVGDPRPGRTVVYTGDTRPLNSTVEVACDADLLVHDATFTDEEAERAKQTAHSTAREAARVARDADVRRFALTHISARYAADPSPLLEQAREVYDGEAFVAEDGQKLEVPYADSDGGGAETGE</sequence>
<proteinExistence type="evidence at protein level"/>
<comment type="function">
    <text evidence="3 4">Zinc phosphodiesterase, which displays some tRNA 3'-processing endonuclease activity. Probably involved in tRNA maturation, by removing a 3'-trailer from precursor tRNA. Can also catalyze the 5' end cleavage of the 5S rRNA.</text>
</comment>
<comment type="catalytic activity">
    <reaction evidence="2 3 4">
        <text>Endonucleolytic cleavage of RNA, removing extra 3' nucleotides from tRNA precursor, generating 3' termini of tRNAs. A 3'-hydroxy group is left at the tRNA terminus and a 5'-phosphoryl group is left at the trailer molecule.</text>
        <dbReference type="EC" id="3.1.26.11"/>
    </reaction>
</comment>
<comment type="cofactor">
    <cofactor evidence="2">
        <name>Zn(2+)</name>
        <dbReference type="ChEBI" id="CHEBI:29105"/>
    </cofactor>
    <text evidence="1 2">Binds 2 Zn(2+) ions.</text>
</comment>
<comment type="activity regulation">
    <text evidence="3 4">Inhibited by high salt concentrations.</text>
</comment>
<comment type="biophysicochemical properties">
    <phDependence>
        <text evidence="4">Optimum pH is 5.5.</text>
    </phDependence>
    <temperatureDependence>
        <text evidence="4">Optimum temperature is 37 degrees Celsius.</text>
    </temperatureDependence>
</comment>
<comment type="subunit">
    <text evidence="2 4">Homodimer.</text>
</comment>
<comment type="similarity">
    <text evidence="2 6">Belongs to the RNase Z family.</text>
</comment>
<gene>
    <name evidence="2 5" type="primary">rnz</name>
    <name type="ordered locus">HVO_0144</name>
</gene>
<keyword id="KW-0255">Endonuclease</keyword>
<keyword id="KW-0378">Hydrolase</keyword>
<keyword id="KW-0479">Metal-binding</keyword>
<keyword id="KW-0540">Nuclease</keyword>
<keyword id="KW-1185">Reference proteome</keyword>
<keyword id="KW-0819">tRNA processing</keyword>
<keyword id="KW-0862">Zinc</keyword>
<organism>
    <name type="scientific">Haloferax volcanii (strain ATCC 29605 / DSM 3757 / JCM 8879 / NBRC 14742 / NCIMB 2012 / VKM B-1768 / DS2)</name>
    <name type="common">Halobacterium volcanii</name>
    <dbReference type="NCBI Taxonomy" id="309800"/>
    <lineage>
        <taxon>Archaea</taxon>
        <taxon>Methanobacteriati</taxon>
        <taxon>Methanobacteriota</taxon>
        <taxon>Stenosarchaea group</taxon>
        <taxon>Halobacteria</taxon>
        <taxon>Halobacteriales</taxon>
        <taxon>Haloferacaceae</taxon>
        <taxon>Haloferax</taxon>
    </lineage>
</organism>
<accession>D4GZ88</accession>
<feature type="chain" id="PRO_0000411053" description="Ribonuclease Z">
    <location>
        <begin position="1"/>
        <end position="317"/>
    </location>
</feature>
<feature type="active site" description="Proton acceptor" evidence="2">
    <location>
        <position position="65"/>
    </location>
</feature>
<feature type="binding site" evidence="2">
    <location>
        <position position="61"/>
    </location>
    <ligand>
        <name>Zn(2+)</name>
        <dbReference type="ChEBI" id="CHEBI:29105"/>
        <label>1</label>
        <note>catalytic</note>
    </ligand>
</feature>
<feature type="binding site" evidence="2">
    <location>
        <position position="63"/>
    </location>
    <ligand>
        <name>Zn(2+)</name>
        <dbReference type="ChEBI" id="CHEBI:29105"/>
        <label>1</label>
        <note>catalytic</note>
    </ligand>
</feature>
<feature type="binding site" evidence="2">
    <location>
        <position position="65"/>
    </location>
    <ligand>
        <name>Zn(2+)</name>
        <dbReference type="ChEBI" id="CHEBI:29105"/>
        <label>2</label>
        <note>catalytic</note>
    </ligand>
</feature>
<feature type="binding site" evidence="2">
    <location>
        <position position="66"/>
    </location>
    <ligand>
        <name>Zn(2+)</name>
        <dbReference type="ChEBI" id="CHEBI:29105"/>
        <label>2</label>
        <note>catalytic</note>
    </ligand>
</feature>
<feature type="binding site" evidence="2">
    <location>
        <position position="139"/>
    </location>
    <ligand>
        <name>Zn(2+)</name>
        <dbReference type="ChEBI" id="CHEBI:29105"/>
        <label>1</label>
        <note>catalytic</note>
    </ligand>
</feature>
<feature type="binding site" evidence="2">
    <location>
        <position position="210"/>
    </location>
    <ligand>
        <name>Zn(2+)</name>
        <dbReference type="ChEBI" id="CHEBI:29105"/>
        <label>1</label>
        <note>catalytic</note>
    </ligand>
</feature>
<feature type="binding site" evidence="2">
    <location>
        <position position="210"/>
    </location>
    <ligand>
        <name>Zn(2+)</name>
        <dbReference type="ChEBI" id="CHEBI:29105"/>
        <label>2</label>
        <note>catalytic</note>
    </ligand>
</feature>
<feature type="binding site" evidence="2">
    <location>
        <position position="268"/>
    </location>
    <ligand>
        <name>Zn(2+)</name>
        <dbReference type="ChEBI" id="CHEBI:29105"/>
        <label>2</label>
        <note>catalytic</note>
    </ligand>
</feature>
<reference key="1">
    <citation type="journal article" date="2010" name="PLoS ONE">
        <title>The complete genome sequence of Haloferax volcanii DS2, a model archaeon.</title>
        <authorList>
            <person name="Hartman A.L."/>
            <person name="Norais C."/>
            <person name="Badger J.H."/>
            <person name="Delmas S."/>
            <person name="Haldenby S."/>
            <person name="Madupu R."/>
            <person name="Robinson J."/>
            <person name="Khouri H."/>
            <person name="Ren Q."/>
            <person name="Lowe T.M."/>
            <person name="Maupin-Furlow J."/>
            <person name="Pohlschroder M."/>
            <person name="Daniels C."/>
            <person name="Pfeiffer F."/>
            <person name="Allers T."/>
            <person name="Eisen J.A."/>
        </authorList>
    </citation>
    <scope>NUCLEOTIDE SEQUENCE [LARGE SCALE GENOMIC DNA]</scope>
    <source>
        <strain>ATCC 29605 / DSM 3757 / JCM 8879 / NBRC 14742 / NCIMB 2012 / VKM B-1768 / DS2</strain>
    </source>
</reference>
<reference key="2">
    <citation type="journal article" date="2008" name="Arch. Microbiol.">
        <title>Two archaeal tRNase Z enzymes: similar but different.</title>
        <authorList>
            <person name="Spath B."/>
            <person name="Schubert S."/>
            <person name="Lieberoth A."/>
            <person name="Settele F."/>
            <person name="Schutz S."/>
            <person name="Fischer S."/>
            <person name="Marchfelder A."/>
        </authorList>
    </citation>
    <scope>FUNCTION</scope>
    <scope>CATALYTIC ACTIVITY</scope>
    <scope>ACTIVITY REGULATION</scope>
    <scope>BIOPHYSICOCHEMICAL PROPERTIES</scope>
    <scope>SUBUNIT</scope>
    <source>
        <strain>DS2 / DS70</strain>
    </source>
</reference>
<reference key="3">
    <citation type="journal article" date="2008" name="RNA">
        <title>Maturation of the 5S rRNA 5' end is catalyzed in vitro by the endonuclease tRNase Z in the archaeon H. volcanii.</title>
        <authorList>
            <person name="Holzle A."/>
            <person name="Fischer S."/>
            <person name="Heyer R."/>
            <person name="Schutz S."/>
            <person name="Zacharias M."/>
            <person name="Walther P."/>
            <person name="Allers T."/>
            <person name="Marchfelder A."/>
        </authorList>
    </citation>
    <scope>FUNCTION</scope>
    <scope>CATALYTIC ACTIVITY</scope>
    <scope>ACTIVITY REGULATION</scope>
    <source>
        <strain>DS2 / DS70</strain>
    </source>
</reference>
<reference key="4">
    <citation type="journal article" date="2020" name="Nat. Commun.">
        <title>The Archaeal Proteome Project advances knowledge about archaeal cell biology through comprehensive proteomics.</title>
        <authorList>
            <person name="Schulze S."/>
            <person name="Adams Z."/>
            <person name="Cerletti M."/>
            <person name="De Castro R."/>
            <person name="Ferreira-Cerca S."/>
            <person name="Fufezan C."/>
            <person name="Gimenez M.I."/>
            <person name="Hippler M."/>
            <person name="Jevtic Z."/>
            <person name="Knueppel R."/>
            <person name="Legerme G."/>
            <person name="Lenz C."/>
            <person name="Marchfelder A."/>
            <person name="Maupin-Furlow J."/>
            <person name="Paggi R.A."/>
            <person name="Pfeiffer F."/>
            <person name="Poetsch A."/>
            <person name="Urlaub H."/>
            <person name="Pohlschroder M."/>
        </authorList>
    </citation>
    <scope>IDENTIFICATION BY MASS SPECTROMETRY</scope>
    <source>
        <strain>ATCC 29605 / DSM 3757 / JCM 8879 / NBRC 14742 / NCIMB 2012 / VKM B-1768 / DS2</strain>
    </source>
</reference>
<dbReference type="EC" id="3.1.26.11" evidence="2"/>
<dbReference type="EMBL" id="CP001956">
    <property type="protein sequence ID" value="ADE02929.2"/>
    <property type="molecule type" value="Genomic_DNA"/>
</dbReference>
<dbReference type="SMR" id="D4GZ88"/>
<dbReference type="STRING" id="309800.HVO_0144"/>
<dbReference type="PaxDb" id="309800-C498_18963"/>
<dbReference type="EnsemblBacteria" id="ADE02929">
    <property type="protein sequence ID" value="ADE02929"/>
    <property type="gene ID" value="HVO_0144"/>
</dbReference>
<dbReference type="KEGG" id="hvo:HVO_0144"/>
<dbReference type="eggNOG" id="arCOG00501">
    <property type="taxonomic scope" value="Archaea"/>
</dbReference>
<dbReference type="HOGENOM" id="CLU_031317_2_1_2"/>
<dbReference type="Proteomes" id="UP000008243">
    <property type="component" value="Chromosome"/>
</dbReference>
<dbReference type="GO" id="GO:0042781">
    <property type="term" value="F:3'-tRNA processing endoribonuclease activity"/>
    <property type="evidence" value="ECO:0007669"/>
    <property type="project" value="UniProtKB-UniRule"/>
</dbReference>
<dbReference type="GO" id="GO:0008270">
    <property type="term" value="F:zinc ion binding"/>
    <property type="evidence" value="ECO:0007669"/>
    <property type="project" value="UniProtKB-UniRule"/>
</dbReference>
<dbReference type="CDD" id="cd07717">
    <property type="entry name" value="RNaseZ_ZiPD-like_MBL-fold"/>
    <property type="match status" value="1"/>
</dbReference>
<dbReference type="FunFam" id="3.60.15.10:FF:000002">
    <property type="entry name" value="Ribonuclease Z"/>
    <property type="match status" value="1"/>
</dbReference>
<dbReference type="Gene3D" id="3.60.15.10">
    <property type="entry name" value="Ribonuclease Z/Hydroxyacylglutathione hydrolase-like"/>
    <property type="match status" value="1"/>
</dbReference>
<dbReference type="HAMAP" id="MF_01818">
    <property type="entry name" value="RNase_Z_BN"/>
    <property type="match status" value="1"/>
</dbReference>
<dbReference type="InterPro" id="IPR001279">
    <property type="entry name" value="Metallo-B-lactamas"/>
</dbReference>
<dbReference type="InterPro" id="IPR036866">
    <property type="entry name" value="RibonucZ/Hydroxyglut_hydro"/>
</dbReference>
<dbReference type="InterPro" id="IPR013471">
    <property type="entry name" value="RNase_Z/BN"/>
</dbReference>
<dbReference type="NCBIfam" id="NF000801">
    <property type="entry name" value="PRK00055.1-3"/>
    <property type="match status" value="1"/>
</dbReference>
<dbReference type="NCBIfam" id="TIGR02651">
    <property type="entry name" value="RNase_Z"/>
    <property type="match status" value="1"/>
</dbReference>
<dbReference type="PANTHER" id="PTHR46018">
    <property type="entry name" value="ZINC PHOSPHODIESTERASE ELAC PROTEIN 1"/>
    <property type="match status" value="1"/>
</dbReference>
<dbReference type="PANTHER" id="PTHR46018:SF2">
    <property type="entry name" value="ZINC PHOSPHODIESTERASE ELAC PROTEIN 1"/>
    <property type="match status" value="1"/>
</dbReference>
<dbReference type="Pfam" id="PF00753">
    <property type="entry name" value="Lactamase_B"/>
    <property type="match status" value="1"/>
</dbReference>
<dbReference type="SMART" id="SM00849">
    <property type="entry name" value="Lactamase_B"/>
    <property type="match status" value="1"/>
</dbReference>
<dbReference type="SUPFAM" id="SSF56281">
    <property type="entry name" value="Metallo-hydrolase/oxidoreductase"/>
    <property type="match status" value="1"/>
</dbReference>
<evidence type="ECO:0000250" key="1"/>
<evidence type="ECO:0000255" key="2">
    <source>
        <dbReference type="HAMAP-Rule" id="MF_01818"/>
    </source>
</evidence>
<evidence type="ECO:0000269" key="3">
    <source>
    </source>
</evidence>
<evidence type="ECO:0000269" key="4">
    <source>
    </source>
</evidence>
<evidence type="ECO:0000303" key="5">
    <source>
    </source>
</evidence>
<evidence type="ECO:0000305" key="6"/>
<protein>
    <recommendedName>
        <fullName evidence="2">Ribonuclease Z</fullName>
        <shortName evidence="2">RNase Z</shortName>
        <ecNumber evidence="2">3.1.26.11</ecNumber>
    </recommendedName>
    <alternativeName>
        <fullName evidence="2">tRNA 3 endonuclease</fullName>
    </alternativeName>
    <alternativeName>
        <fullName evidence="2">tRNase Z</fullName>
    </alternativeName>
</protein>